<evidence type="ECO:0000250" key="1"/>
<evidence type="ECO:0000250" key="2">
    <source>
        <dbReference type="UniProtKB" id="O08651"/>
    </source>
</evidence>
<evidence type="ECO:0000250" key="3">
    <source>
        <dbReference type="UniProtKB" id="O43175"/>
    </source>
</evidence>
<evidence type="ECO:0000250" key="4">
    <source>
        <dbReference type="UniProtKB" id="Q61753"/>
    </source>
</evidence>
<evidence type="ECO:0000305" key="5"/>
<reference key="1">
    <citation type="submission" date="2007-05" db="EMBL/GenBank/DDBJ databases">
        <authorList>
            <consortium name="Porcine genome sequencing project"/>
        </authorList>
    </citation>
    <scope>NUCLEOTIDE SEQUENCE [LARGE SCALE GENOMIC DNA]</scope>
</reference>
<name>SERA_PIG</name>
<protein>
    <recommendedName>
        <fullName>D-3-phosphoglycerate dehydrogenase</fullName>
        <shortName>3-PGDH</shortName>
        <ecNumber evidence="3">1.1.1.95</ecNumber>
    </recommendedName>
    <alternativeName>
        <fullName evidence="5">2-oxoglutarate reductase</fullName>
        <ecNumber evidence="3">1.1.1.399</ecNumber>
    </alternativeName>
    <alternativeName>
        <fullName evidence="5">Malate dehydrogenase</fullName>
        <ecNumber evidence="3">1.1.1.37</ecNumber>
    </alternativeName>
</protein>
<accession>A5GFY8</accession>
<dbReference type="EC" id="1.1.1.95" evidence="3"/>
<dbReference type="EC" id="1.1.1.399" evidence="3"/>
<dbReference type="EC" id="1.1.1.37" evidence="3"/>
<dbReference type="EMBL" id="CR956647">
    <property type="protein sequence ID" value="CAN13230.1"/>
    <property type="molecule type" value="Genomic_DNA"/>
</dbReference>
<dbReference type="RefSeq" id="NP_001116634.1">
    <property type="nucleotide sequence ID" value="NM_001123162.1"/>
</dbReference>
<dbReference type="SMR" id="A5GFY8"/>
<dbReference type="FunCoup" id="A5GFY8">
    <property type="interactions" value="760"/>
</dbReference>
<dbReference type="STRING" id="9823.ENSSSCP00000063129"/>
<dbReference type="PaxDb" id="9823-ENSSSCP00000007163"/>
<dbReference type="PeptideAtlas" id="A5GFY8"/>
<dbReference type="Ensembl" id="ENSSSCT00000007358.3">
    <property type="protein sequence ID" value="ENSSSCP00000007163.1"/>
    <property type="gene ID" value="ENSSSCG00000006717.4"/>
</dbReference>
<dbReference type="GeneID" id="100144529"/>
<dbReference type="KEGG" id="ssc:100144529"/>
<dbReference type="CTD" id="26227"/>
<dbReference type="VGNC" id="VGNC:98184">
    <property type="gene designation" value="PHGDH"/>
</dbReference>
<dbReference type="eggNOG" id="KOG0068">
    <property type="taxonomic scope" value="Eukaryota"/>
</dbReference>
<dbReference type="GeneTree" id="ENSGT00940000155863"/>
<dbReference type="HOGENOM" id="CLU_019796_8_1_1"/>
<dbReference type="InParanoid" id="A5GFY8"/>
<dbReference type="OMA" id="NIAGMQV"/>
<dbReference type="OrthoDB" id="1621027at2759"/>
<dbReference type="TreeFam" id="TF314548"/>
<dbReference type="Reactome" id="R-SSC-977347">
    <property type="pathway name" value="Serine biosynthesis"/>
</dbReference>
<dbReference type="UniPathway" id="UPA00135">
    <property type="reaction ID" value="UER00196"/>
</dbReference>
<dbReference type="Proteomes" id="UP000008227">
    <property type="component" value="Chromosome 4"/>
</dbReference>
<dbReference type="Proteomes" id="UP000314985">
    <property type="component" value="Unplaced"/>
</dbReference>
<dbReference type="Proteomes" id="UP000694570">
    <property type="component" value="Unplaced"/>
</dbReference>
<dbReference type="Proteomes" id="UP000694571">
    <property type="component" value="Unplaced"/>
</dbReference>
<dbReference type="Proteomes" id="UP000694720">
    <property type="component" value="Unplaced"/>
</dbReference>
<dbReference type="Proteomes" id="UP000694722">
    <property type="component" value="Unplaced"/>
</dbReference>
<dbReference type="Proteomes" id="UP000694723">
    <property type="component" value="Unplaced"/>
</dbReference>
<dbReference type="Proteomes" id="UP000694724">
    <property type="component" value="Unplaced"/>
</dbReference>
<dbReference type="Proteomes" id="UP000694725">
    <property type="component" value="Unplaced"/>
</dbReference>
<dbReference type="Proteomes" id="UP000694726">
    <property type="component" value="Unplaced"/>
</dbReference>
<dbReference type="Proteomes" id="UP000694727">
    <property type="component" value="Unplaced"/>
</dbReference>
<dbReference type="Proteomes" id="UP000694728">
    <property type="component" value="Unplaced"/>
</dbReference>
<dbReference type="Bgee" id="ENSSSCG00000006717">
    <property type="expression patterns" value="Expressed in uterus and 43 other cell types or tissues"/>
</dbReference>
<dbReference type="ExpressionAtlas" id="A5GFY8">
    <property type="expression patterns" value="baseline and differential"/>
</dbReference>
<dbReference type="GO" id="GO:0030060">
    <property type="term" value="F:L-malate dehydrogenase (NAD+) activity"/>
    <property type="evidence" value="ECO:0007669"/>
    <property type="project" value="UniProtKB-EC"/>
</dbReference>
<dbReference type="GO" id="GO:0051287">
    <property type="term" value="F:NAD binding"/>
    <property type="evidence" value="ECO:0007669"/>
    <property type="project" value="InterPro"/>
</dbReference>
<dbReference type="GO" id="GO:0004617">
    <property type="term" value="F:phosphoglycerate dehydrogenase activity"/>
    <property type="evidence" value="ECO:0000318"/>
    <property type="project" value="GO_Central"/>
</dbReference>
<dbReference type="GO" id="GO:0006564">
    <property type="term" value="P:L-serine biosynthetic process"/>
    <property type="evidence" value="ECO:0007669"/>
    <property type="project" value="UniProtKB-KW"/>
</dbReference>
<dbReference type="CDD" id="cd12173">
    <property type="entry name" value="PGDH_4"/>
    <property type="match status" value="1"/>
</dbReference>
<dbReference type="FunFam" id="3.30.1330.90:FF:000005">
    <property type="entry name" value="D-3-phosphoglycerate dehydrogenase"/>
    <property type="match status" value="1"/>
</dbReference>
<dbReference type="FunFam" id="3.40.50.720:FF:000021">
    <property type="entry name" value="D-3-phosphoglycerate dehydrogenase"/>
    <property type="match status" value="1"/>
</dbReference>
<dbReference type="FunFam" id="3.40.50.720:FF:000616">
    <property type="entry name" value="D-3-phosphoglycerate dehydrogenase 2 chloroplastic"/>
    <property type="match status" value="1"/>
</dbReference>
<dbReference type="Gene3D" id="3.30.1330.90">
    <property type="entry name" value="D-3-phosphoglycerate dehydrogenase, domain 3"/>
    <property type="match status" value="1"/>
</dbReference>
<dbReference type="Gene3D" id="3.40.50.720">
    <property type="entry name" value="NAD(P)-binding Rossmann-like Domain"/>
    <property type="match status" value="2"/>
</dbReference>
<dbReference type="InterPro" id="IPR029009">
    <property type="entry name" value="ASB_dom_sf"/>
</dbReference>
<dbReference type="InterPro" id="IPR006139">
    <property type="entry name" value="D-isomer_2_OHA_DH_cat_dom"/>
</dbReference>
<dbReference type="InterPro" id="IPR029753">
    <property type="entry name" value="D-isomer_DH_CS"/>
</dbReference>
<dbReference type="InterPro" id="IPR029752">
    <property type="entry name" value="D-isomer_DH_CS1"/>
</dbReference>
<dbReference type="InterPro" id="IPR006140">
    <property type="entry name" value="D-isomer_DH_NAD-bd"/>
</dbReference>
<dbReference type="InterPro" id="IPR036291">
    <property type="entry name" value="NAD(P)-bd_dom_sf"/>
</dbReference>
<dbReference type="InterPro" id="IPR006236">
    <property type="entry name" value="PGDH"/>
</dbReference>
<dbReference type="InterPro" id="IPR045626">
    <property type="entry name" value="PGDH_ASB_dom"/>
</dbReference>
<dbReference type="NCBIfam" id="TIGR01327">
    <property type="entry name" value="PGDH"/>
    <property type="match status" value="1"/>
</dbReference>
<dbReference type="PANTHER" id="PTHR42938:SF22">
    <property type="entry name" value="D-3-PHOSPHOGLYCERATE DEHYDROGENASE"/>
    <property type="match status" value="1"/>
</dbReference>
<dbReference type="PANTHER" id="PTHR42938">
    <property type="entry name" value="FORMATE DEHYDROGENASE 1"/>
    <property type="match status" value="1"/>
</dbReference>
<dbReference type="Pfam" id="PF00389">
    <property type="entry name" value="2-Hacid_dh"/>
    <property type="match status" value="1"/>
</dbReference>
<dbReference type="Pfam" id="PF02826">
    <property type="entry name" value="2-Hacid_dh_C"/>
    <property type="match status" value="1"/>
</dbReference>
<dbReference type="Pfam" id="PF19304">
    <property type="entry name" value="PGDH_inter"/>
    <property type="match status" value="1"/>
</dbReference>
<dbReference type="SUPFAM" id="SSF52283">
    <property type="entry name" value="Formate/glycerate dehydrogenase catalytic domain-like"/>
    <property type="match status" value="1"/>
</dbReference>
<dbReference type="SUPFAM" id="SSF51735">
    <property type="entry name" value="NAD(P)-binding Rossmann-fold domains"/>
    <property type="match status" value="1"/>
</dbReference>
<dbReference type="SUPFAM" id="SSF143548">
    <property type="entry name" value="Serine metabolism enzymes domain"/>
    <property type="match status" value="1"/>
</dbReference>
<dbReference type="PROSITE" id="PS00065">
    <property type="entry name" value="D_2_HYDROXYACID_DH_1"/>
    <property type="match status" value="1"/>
</dbReference>
<dbReference type="PROSITE" id="PS00670">
    <property type="entry name" value="D_2_HYDROXYACID_DH_2"/>
    <property type="match status" value="1"/>
</dbReference>
<dbReference type="PROSITE" id="PS00671">
    <property type="entry name" value="D_2_HYDROXYACID_DH_3"/>
    <property type="match status" value="1"/>
</dbReference>
<keyword id="KW-0007">Acetylation</keyword>
<keyword id="KW-0028">Amino-acid biosynthesis</keyword>
<keyword id="KW-0520">NAD</keyword>
<keyword id="KW-0560">Oxidoreductase</keyword>
<keyword id="KW-0597">Phosphoprotein</keyword>
<keyword id="KW-1185">Reference proteome</keyword>
<keyword id="KW-0718">Serine biosynthesis</keyword>
<sequence length="533" mass="56810">MAFANLRKVLISDSLDPCCREILQDGGLQVVEKQNLSKEELIAELQDCEGLIVRSATKVTSDVINAAKKLQVVGRAGTGVDNVDLEAATRKGILVMNTPNGNSLSAAELTCGMILCLARQIPQATASMKDGKWERKKFMGTELNGKVLGILGLGRIGREVATRMQSFGMKTIGYDPIIAPEVSASFGVQQLPLEEIWPLCDFITVHTPLLPSTTGLLNDSTFALCKKGVRVVNCARGGIVDEGALLRALQSGQCAGAALDVFTEEPPRDRALVDHEKVISCPHLGASTREAQSRCGEEIAIQFVDMVKGRSLAGVVNAQALTSAFSPHTKPWIGLAEALGALMQAWAGSPKGTIQVVTQGTSLKNSGTCLSPAVIVGLLKEASHRADVNLVNAKLLEKEAGLHVTTSHNPAAPEEQGGAECFLTVALAGAPYQAVGLVQGTAPMLHALNGAVFRPEVPLRRGLPLLLFRAQPSNPTMLPTMIGLLAEARVQLLSYQTSVVSDGETWHVMAISSLLPSLEPWKQHVTEAFQFHF</sequence>
<comment type="function">
    <text evidence="3">Catalyzes the reversible oxidation of 3-phospho-D-glycerate to 3-phosphonooxypyruvate, the first step of the phosphorylated L-serine biosynthesis pathway. Also catalyzes the reversible oxidation of 2-hydroxyglutarate to 2-oxoglutarate and the reversible oxidation of (S)-malate to oxaloacetate.</text>
</comment>
<comment type="catalytic activity">
    <reaction evidence="3">
        <text>(2R)-3-phosphoglycerate + NAD(+) = 3-phosphooxypyruvate + NADH + H(+)</text>
        <dbReference type="Rhea" id="RHEA:12641"/>
        <dbReference type="ChEBI" id="CHEBI:15378"/>
        <dbReference type="ChEBI" id="CHEBI:18110"/>
        <dbReference type="ChEBI" id="CHEBI:57540"/>
        <dbReference type="ChEBI" id="CHEBI:57945"/>
        <dbReference type="ChEBI" id="CHEBI:58272"/>
        <dbReference type="EC" id="1.1.1.95"/>
    </reaction>
</comment>
<comment type="catalytic activity">
    <reaction evidence="3">
        <text>(R)-2-hydroxyglutarate + NAD(+) = 2-oxoglutarate + NADH + H(+)</text>
        <dbReference type="Rhea" id="RHEA:49612"/>
        <dbReference type="ChEBI" id="CHEBI:15378"/>
        <dbReference type="ChEBI" id="CHEBI:15801"/>
        <dbReference type="ChEBI" id="CHEBI:16810"/>
        <dbReference type="ChEBI" id="CHEBI:57540"/>
        <dbReference type="ChEBI" id="CHEBI:57945"/>
        <dbReference type="EC" id="1.1.1.399"/>
    </reaction>
</comment>
<comment type="catalytic activity">
    <reaction evidence="3">
        <text>(S)-malate + NAD(+) = oxaloacetate + NADH + H(+)</text>
        <dbReference type="Rhea" id="RHEA:21432"/>
        <dbReference type="ChEBI" id="CHEBI:15378"/>
        <dbReference type="ChEBI" id="CHEBI:15589"/>
        <dbReference type="ChEBI" id="CHEBI:16452"/>
        <dbReference type="ChEBI" id="CHEBI:57540"/>
        <dbReference type="ChEBI" id="CHEBI:57945"/>
        <dbReference type="EC" id="1.1.1.37"/>
    </reaction>
</comment>
<comment type="pathway">
    <text>Amino-acid biosynthesis; L-serine biosynthesis; L-serine from 3-phospho-D-glycerate: step 1/3.</text>
</comment>
<comment type="subunit">
    <text evidence="2">Homotetramer.</text>
</comment>
<comment type="similarity">
    <text evidence="5">Belongs to the D-isomer specific 2-hydroxyacid dehydrogenase family.</text>
</comment>
<feature type="initiator methionine" description="Removed" evidence="3">
    <location>
        <position position="1"/>
    </location>
</feature>
<feature type="chain" id="PRO_0000318300" description="D-3-phosphoglycerate dehydrogenase">
    <location>
        <begin position="2"/>
        <end position="533"/>
    </location>
</feature>
<feature type="active site" evidence="1">
    <location>
        <position position="236"/>
    </location>
</feature>
<feature type="active site" evidence="1">
    <location>
        <position position="265"/>
    </location>
</feature>
<feature type="active site" description="Proton donor" evidence="1">
    <location>
        <position position="283"/>
    </location>
</feature>
<feature type="binding site" evidence="3">
    <location>
        <position position="78"/>
    </location>
    <ligand>
        <name>NAD(+)</name>
        <dbReference type="ChEBI" id="CHEBI:57540"/>
    </ligand>
</feature>
<feature type="binding site" evidence="3">
    <location>
        <begin position="155"/>
        <end position="156"/>
    </location>
    <ligand>
        <name>NAD(+)</name>
        <dbReference type="ChEBI" id="CHEBI:57540"/>
    </ligand>
</feature>
<feature type="binding site" evidence="3">
    <location>
        <position position="175"/>
    </location>
    <ligand>
        <name>NAD(+)</name>
        <dbReference type="ChEBI" id="CHEBI:57540"/>
    </ligand>
</feature>
<feature type="binding site" evidence="3">
    <location>
        <position position="207"/>
    </location>
    <ligand>
        <name>NAD(+)</name>
        <dbReference type="ChEBI" id="CHEBI:57540"/>
    </ligand>
</feature>
<feature type="binding site" evidence="3">
    <location>
        <begin position="234"/>
        <end position="236"/>
    </location>
    <ligand>
        <name>NAD(+)</name>
        <dbReference type="ChEBI" id="CHEBI:57540"/>
    </ligand>
</feature>
<feature type="binding site" evidence="3">
    <location>
        <position position="260"/>
    </location>
    <ligand>
        <name>NAD(+)</name>
        <dbReference type="ChEBI" id="CHEBI:57540"/>
    </ligand>
</feature>
<feature type="binding site" evidence="3">
    <location>
        <begin position="283"/>
        <end position="286"/>
    </location>
    <ligand>
        <name>NAD(+)</name>
        <dbReference type="ChEBI" id="CHEBI:57540"/>
    </ligand>
</feature>
<feature type="modified residue" description="N-acetylalanine" evidence="3">
    <location>
        <position position="2"/>
    </location>
</feature>
<feature type="modified residue" description="Phosphoserine" evidence="3">
    <location>
        <position position="14"/>
    </location>
</feature>
<feature type="modified residue" description="N6-acetyllysine" evidence="4">
    <location>
        <position position="58"/>
    </location>
</feature>
<feature type="modified residue" description="Phosphothreonine" evidence="3">
    <location>
        <position position="78"/>
    </location>
</feature>
<proteinExistence type="inferred from homology"/>
<organism>
    <name type="scientific">Sus scrofa</name>
    <name type="common">Pig</name>
    <dbReference type="NCBI Taxonomy" id="9823"/>
    <lineage>
        <taxon>Eukaryota</taxon>
        <taxon>Metazoa</taxon>
        <taxon>Chordata</taxon>
        <taxon>Craniata</taxon>
        <taxon>Vertebrata</taxon>
        <taxon>Euteleostomi</taxon>
        <taxon>Mammalia</taxon>
        <taxon>Eutheria</taxon>
        <taxon>Laurasiatheria</taxon>
        <taxon>Artiodactyla</taxon>
        <taxon>Suina</taxon>
        <taxon>Suidae</taxon>
        <taxon>Sus</taxon>
    </lineage>
</organism>
<gene>
    <name type="primary">PHGDH</name>
</gene>